<keyword id="KW-0004">4Fe-4S</keyword>
<keyword id="KW-0408">Iron</keyword>
<keyword id="KW-0411">Iron-sulfur</keyword>
<keyword id="KW-0413">Isomerase</keyword>
<keyword id="KW-0479">Metal-binding</keyword>
<keyword id="KW-0663">Pyridoxal phosphate</keyword>
<keyword id="KW-1185">Reference proteome</keyword>
<keyword id="KW-0949">S-adenosyl-L-methionine</keyword>
<reference key="1">
    <citation type="journal article" date="1995" name="Science">
        <title>Whole-genome random sequencing and assembly of Haemophilus influenzae Rd.</title>
        <authorList>
            <person name="Fleischmann R.D."/>
            <person name="Adams M.D."/>
            <person name="White O."/>
            <person name="Clayton R.A."/>
            <person name="Kirkness E.F."/>
            <person name="Kerlavage A.R."/>
            <person name="Bult C.J."/>
            <person name="Tomb J.-F."/>
            <person name="Dougherty B.A."/>
            <person name="Merrick J.M."/>
            <person name="McKenney K."/>
            <person name="Sutton G.G."/>
            <person name="FitzHugh W."/>
            <person name="Fields C.A."/>
            <person name="Gocayne J.D."/>
            <person name="Scott J.D."/>
            <person name="Shirley R."/>
            <person name="Liu L.-I."/>
            <person name="Glodek A."/>
            <person name="Kelley J.M."/>
            <person name="Weidman J.F."/>
            <person name="Phillips C.A."/>
            <person name="Spriggs T."/>
            <person name="Hedblom E."/>
            <person name="Cotton M.D."/>
            <person name="Utterback T.R."/>
            <person name="Hanna M.C."/>
            <person name="Nguyen D.T."/>
            <person name="Saudek D.M."/>
            <person name="Brandon R.C."/>
            <person name="Fine L.D."/>
            <person name="Fritchman J.L."/>
            <person name="Fuhrmann J.L."/>
            <person name="Geoghagen N.S.M."/>
            <person name="Gnehm C.L."/>
            <person name="McDonald L.A."/>
            <person name="Small K.V."/>
            <person name="Fraser C.M."/>
            <person name="Smith H.O."/>
            <person name="Venter J.C."/>
        </authorList>
    </citation>
    <scope>NUCLEOTIDE SEQUENCE [LARGE SCALE GENOMIC DNA]</scope>
    <source>
        <strain>ATCC 51907 / DSM 11121 / KW20 / Rd</strain>
    </source>
</reference>
<protein>
    <recommendedName>
        <fullName>L-lysine 2,3-aminomutase</fullName>
        <shortName>LAM</shortName>
        <ecNumber>5.4.3.-</ecNumber>
    </recommendedName>
    <alternativeName>
        <fullName>EF-P post-translational modification enzyme B</fullName>
    </alternativeName>
</protein>
<accession>P44641</accession>
<comment type="function">
    <text evidence="1">With EpmA is involved in the beta-lysylation step of the post-translational modification of translation elongation factor P (EF-P) on 'Lys-34'. EpmB appears to act before EpmA. Displays lysine 2,3-aminomutase activity, producing (R)-beta-lysine from (S)-alpha-lysine (L-lysine) (By similarity).</text>
</comment>
<comment type="catalytic activity">
    <reaction>
        <text>L-lysine = D-beta-lysine</text>
        <dbReference type="Rhea" id="RHEA:44148"/>
        <dbReference type="ChEBI" id="CHEBI:32551"/>
        <dbReference type="ChEBI" id="CHEBI:84138"/>
    </reaction>
</comment>
<comment type="cofactor">
    <cofactor evidence="1">
        <name>[4Fe-4S] cluster</name>
        <dbReference type="ChEBI" id="CHEBI:49883"/>
    </cofactor>
    <text evidence="1">Binds 1 [4Fe-4S] cluster. The cluster is coordinated with 3 cysteines and an exchangeable S-adenosyl-L-methionine.</text>
</comment>
<comment type="cofactor">
    <cofactor evidence="1">
        <name>pyridoxal 5'-phosphate</name>
        <dbReference type="ChEBI" id="CHEBI:597326"/>
    </cofactor>
</comment>
<comment type="similarity">
    <text evidence="4">Belongs to the radical SAM superfamily. KamA family.</text>
</comment>
<proteinExistence type="inferred from homology"/>
<dbReference type="EC" id="5.4.3.-"/>
<dbReference type="EMBL" id="L42023">
    <property type="protein sequence ID" value="AAC21990.1"/>
    <property type="molecule type" value="Genomic_DNA"/>
</dbReference>
<dbReference type="PIR" id="B64148">
    <property type="entry name" value="B64148"/>
</dbReference>
<dbReference type="RefSeq" id="NP_438493.1">
    <property type="nucleotide sequence ID" value="NC_000907.1"/>
</dbReference>
<dbReference type="SMR" id="P44641"/>
<dbReference type="STRING" id="71421.HI_0329"/>
<dbReference type="EnsemblBacteria" id="AAC21990">
    <property type="protein sequence ID" value="AAC21990"/>
    <property type="gene ID" value="HI_0329"/>
</dbReference>
<dbReference type="KEGG" id="hin:HI_0329"/>
<dbReference type="PATRIC" id="fig|71421.8.peg.346"/>
<dbReference type="eggNOG" id="COG1509">
    <property type="taxonomic scope" value="Bacteria"/>
</dbReference>
<dbReference type="HOGENOM" id="CLU_032161_2_0_6"/>
<dbReference type="OrthoDB" id="9770937at2"/>
<dbReference type="PhylomeDB" id="P44641"/>
<dbReference type="BioCyc" id="HINF71421:G1GJ1-345-MONOMER"/>
<dbReference type="Proteomes" id="UP000000579">
    <property type="component" value="Chromosome"/>
</dbReference>
<dbReference type="GO" id="GO:0051539">
    <property type="term" value="F:4 iron, 4 sulfur cluster binding"/>
    <property type="evidence" value="ECO:0000318"/>
    <property type="project" value="GO_Central"/>
</dbReference>
<dbReference type="GO" id="GO:0016869">
    <property type="term" value="F:intramolecular aminotransferase activity"/>
    <property type="evidence" value="ECO:0000318"/>
    <property type="project" value="GO_Central"/>
</dbReference>
<dbReference type="GO" id="GO:0046872">
    <property type="term" value="F:metal ion binding"/>
    <property type="evidence" value="ECO:0007669"/>
    <property type="project" value="UniProtKB-KW"/>
</dbReference>
<dbReference type="CDD" id="cd01335">
    <property type="entry name" value="Radical_SAM"/>
    <property type="match status" value="1"/>
</dbReference>
<dbReference type="Gene3D" id="3.20.20.70">
    <property type="entry name" value="Aldolase class I"/>
    <property type="match status" value="1"/>
</dbReference>
<dbReference type="InterPro" id="IPR013785">
    <property type="entry name" value="Aldolase_TIM"/>
</dbReference>
<dbReference type="InterPro" id="IPR022462">
    <property type="entry name" value="EpmB"/>
</dbReference>
<dbReference type="InterPro" id="IPR003739">
    <property type="entry name" value="Lys_aminomutase/Glu_NH3_mut"/>
</dbReference>
<dbReference type="InterPro" id="IPR007197">
    <property type="entry name" value="rSAM"/>
</dbReference>
<dbReference type="NCBIfam" id="TIGR03821">
    <property type="entry name" value="EFP_modif_epmB"/>
    <property type="match status" value="1"/>
</dbReference>
<dbReference type="NCBIfam" id="TIGR00238">
    <property type="entry name" value="KamA family radical SAM protein"/>
    <property type="match status" value="1"/>
</dbReference>
<dbReference type="PANTHER" id="PTHR30538:SF1">
    <property type="entry name" value="L-LYSINE 2,3-AMINOMUTASE"/>
    <property type="match status" value="1"/>
</dbReference>
<dbReference type="PANTHER" id="PTHR30538">
    <property type="entry name" value="LYSINE 2,3-AMINOMUTASE-RELATED"/>
    <property type="match status" value="1"/>
</dbReference>
<dbReference type="Pfam" id="PF13353">
    <property type="entry name" value="Fer4_12"/>
    <property type="match status" value="1"/>
</dbReference>
<dbReference type="Pfam" id="PF04055">
    <property type="entry name" value="Radical_SAM"/>
    <property type="match status" value="1"/>
</dbReference>
<dbReference type="PIRSF" id="PIRSF004911">
    <property type="entry name" value="DUF160"/>
    <property type="match status" value="1"/>
</dbReference>
<dbReference type="SFLD" id="SFLDF00314">
    <property type="entry name" value="L-lysine_2_3-aminomutase_(yjeK"/>
    <property type="match status" value="1"/>
</dbReference>
<dbReference type="SFLD" id="SFLDG01070">
    <property type="entry name" value="PLP-dependent"/>
    <property type="match status" value="1"/>
</dbReference>
<dbReference type="SUPFAM" id="SSF102114">
    <property type="entry name" value="Radical SAM enzymes"/>
    <property type="match status" value="1"/>
</dbReference>
<dbReference type="PROSITE" id="PS51918">
    <property type="entry name" value="RADICAL_SAM"/>
    <property type="match status" value="1"/>
</dbReference>
<sequence length="338" mass="38676">MRILPQEPVIREEQNWLTILKNAISDPKLLLKALNLPEDDFEQSIAARKLFSLRVPQPFIDKIEKGNPQDPLFLQVMCSDLEFVQAEGFSTDPLEEKNANAVPNILHKYRNRLLFMAKGGCAVNCRYCFRRHFPYDENPGNKKSWQLALDYIAAHSEIEEVIFSGGDPLMAKDHELAWLIKHLENIPHLQRLRIHTRLPVVIPQRITDEFCTLLAETRLQTVMVTHINHPNEIDQIFAHAMQKLNAVNVTLLNQSVLLKGVNDDAQILKILSDKLFQTGILPYYLHLLDKVQGASHFLISDIEAMQIYKTLQSLTSGYLVPKLAREIAGEPNKTLYAE</sequence>
<name>EPMB_HAEIN</name>
<organism>
    <name type="scientific">Haemophilus influenzae (strain ATCC 51907 / DSM 11121 / KW20 / Rd)</name>
    <dbReference type="NCBI Taxonomy" id="71421"/>
    <lineage>
        <taxon>Bacteria</taxon>
        <taxon>Pseudomonadati</taxon>
        <taxon>Pseudomonadota</taxon>
        <taxon>Gammaproteobacteria</taxon>
        <taxon>Pasteurellales</taxon>
        <taxon>Pasteurellaceae</taxon>
        <taxon>Haemophilus</taxon>
    </lineage>
</organism>
<gene>
    <name type="primary">epmB</name>
    <name type="ordered locus">HI_0329</name>
</gene>
<feature type="chain" id="PRO_0000172289" description="L-lysine 2,3-aminomutase">
    <location>
        <begin position="1"/>
        <end position="338"/>
    </location>
</feature>
<feature type="domain" description="Radical SAM core" evidence="3">
    <location>
        <begin position="107"/>
        <end position="330"/>
    </location>
</feature>
<feature type="binding site" evidence="2">
    <location>
        <position position="121"/>
    </location>
    <ligand>
        <name>[4Fe-4S] cluster</name>
        <dbReference type="ChEBI" id="CHEBI:49883"/>
        <note>4Fe-4S-S-AdoMet</note>
    </ligand>
</feature>
<feature type="binding site" evidence="2">
    <location>
        <position position="125"/>
    </location>
    <ligand>
        <name>[4Fe-4S] cluster</name>
        <dbReference type="ChEBI" id="CHEBI:49883"/>
        <note>4Fe-4S-S-AdoMet</note>
    </ligand>
</feature>
<feature type="binding site" evidence="2">
    <location>
        <position position="128"/>
    </location>
    <ligand>
        <name>[4Fe-4S] cluster</name>
        <dbReference type="ChEBI" id="CHEBI:49883"/>
        <note>4Fe-4S-S-AdoMet</note>
    </ligand>
</feature>
<feature type="modified residue" description="N6-(pyridoxal phosphate)lysine" evidence="1">
    <location>
        <position position="333"/>
    </location>
</feature>
<evidence type="ECO:0000250" key="1"/>
<evidence type="ECO:0000255" key="2"/>
<evidence type="ECO:0000255" key="3">
    <source>
        <dbReference type="PROSITE-ProRule" id="PRU01266"/>
    </source>
</evidence>
<evidence type="ECO:0000305" key="4"/>